<accession>Q80YF6</accession>
<accession>Q0VBK9</accession>
<accession>Q6P8J5</accession>
<accession>Q8BGL8</accession>
<organism>
    <name type="scientific">Mus musculus</name>
    <name type="common">Mouse</name>
    <dbReference type="NCBI Taxonomy" id="10090"/>
    <lineage>
        <taxon>Eukaryota</taxon>
        <taxon>Metazoa</taxon>
        <taxon>Chordata</taxon>
        <taxon>Craniata</taxon>
        <taxon>Vertebrata</taxon>
        <taxon>Euteleostomi</taxon>
        <taxon>Mammalia</taxon>
        <taxon>Eutheria</taxon>
        <taxon>Euarchontoglires</taxon>
        <taxon>Glires</taxon>
        <taxon>Rodentia</taxon>
        <taxon>Myomorpha</taxon>
        <taxon>Muroidea</taxon>
        <taxon>Muridae</taxon>
        <taxon>Murinae</taxon>
        <taxon>Mus</taxon>
        <taxon>Mus</taxon>
    </lineage>
</organism>
<feature type="signal peptide" evidence="2">
    <location>
        <begin position="1"/>
        <end position="26"/>
    </location>
</feature>
<feature type="chain" id="PRO_0000022641" description="Uroplakin-3b">
    <location>
        <begin position="27"/>
        <end position="275"/>
    </location>
</feature>
<feature type="topological domain" description="Lumenal" evidence="2">
    <location>
        <begin position="27"/>
        <end position="196"/>
    </location>
</feature>
<feature type="transmembrane region" description="Helical" evidence="2">
    <location>
        <begin position="197"/>
        <end position="217"/>
    </location>
</feature>
<feature type="topological domain" description="Cytoplasmic" evidence="2">
    <location>
        <begin position="218"/>
        <end position="275"/>
    </location>
</feature>
<feature type="glycosylation site" description="N-linked (GlcNAc...) asparagine" evidence="2">
    <location>
        <position position="77"/>
    </location>
</feature>
<feature type="splice variant" id="VSP_035890" description="In isoform 2." evidence="4 5">
    <original>PLRA</original>
    <variation>HPPPP</variation>
    <location>
        <begin position="9"/>
        <end position="12"/>
    </location>
</feature>
<feature type="sequence conflict" description="In Ref. 2; BAC31149/BAC35025 and 3; AAH61224/AAI37743/AAI20595." evidence="6" ref="2 3">
    <original>A</original>
    <variation>V</variation>
    <location>
        <position position="125"/>
    </location>
</feature>
<sequence>MVRTRWQPPLRALLLLVLVWLPQSLSLDLIAYVPQITAWDLEGKITATTFSLEQPRCVFDEHVSTKDTIWLVVAFSNASRDFQNPQTAAKIPTFPQLLTDGHYMTLPLSLDQLPCEDLTGGSGGAPVLRVGNDFGCYQRPYCNAPLPSQGPYSVKFLVMDAAGPPKAETKWSNPIYLHQGKNPNSIDTWPGRRSGCMIVITSILSALAGLLLLAFLAASTTRFSSLWWPEEAPEQLRIGSFMGKRYMTHHIPPSEAATLPVGCEPGLDPLPSLSP</sequence>
<protein>
    <recommendedName>
        <fullName>Uroplakin-3b</fullName>
        <shortName>UP3b</shortName>
    </recommendedName>
    <alternativeName>
        <fullName>Uroplakin IIIb</fullName>
        <shortName>UPIIIb</shortName>
    </alternativeName>
    <alternativeName>
        <fullName>p35</fullName>
    </alternativeName>
</protein>
<evidence type="ECO:0000250" key="1"/>
<evidence type="ECO:0000255" key="2"/>
<evidence type="ECO:0000269" key="3">
    <source>
    </source>
</evidence>
<evidence type="ECO:0000303" key="4">
    <source>
    </source>
</evidence>
<evidence type="ECO:0000303" key="5">
    <source>
    </source>
</evidence>
<evidence type="ECO:0000305" key="6"/>
<keyword id="KW-0025">Alternative splicing</keyword>
<keyword id="KW-1003">Cell membrane</keyword>
<keyword id="KW-0325">Glycoprotein</keyword>
<keyword id="KW-0472">Membrane</keyword>
<keyword id="KW-1185">Reference proteome</keyword>
<keyword id="KW-0732">Signal</keyword>
<keyword id="KW-0812">Transmembrane</keyword>
<keyword id="KW-1133">Transmembrane helix</keyword>
<reference key="1">
    <citation type="journal article" date="2002" name="J. Cell Biol.">
        <title>Uroplakin IIIb, a urothelial differentiation marker, dimerizes with uroplakin Ib as an early step of urothelial plaque assembly.</title>
        <authorList>
            <person name="Deng F.-M."/>
            <person name="Liang F.-X."/>
            <person name="Tu L."/>
            <person name="Resing K.A."/>
            <person name="Hu P."/>
            <person name="Supino M."/>
            <person name="Hu C.-C.A."/>
            <person name="Zhou G."/>
            <person name="Ding M."/>
            <person name="Kreibich G."/>
            <person name="Sun T.-T."/>
        </authorList>
    </citation>
    <scope>NUCLEOTIDE SEQUENCE [MRNA] (ISOFORM 1)</scope>
    <scope>INTERACTION WITH UPK1B</scope>
    <scope>SUBCELLULAR LOCATION</scope>
    <scope>TISSUE SPECIFICITY</scope>
</reference>
<reference key="2">
    <citation type="journal article" date="2005" name="Science">
        <title>The transcriptional landscape of the mammalian genome.</title>
        <authorList>
            <person name="Carninci P."/>
            <person name="Kasukawa T."/>
            <person name="Katayama S."/>
            <person name="Gough J."/>
            <person name="Frith M.C."/>
            <person name="Maeda N."/>
            <person name="Oyama R."/>
            <person name="Ravasi T."/>
            <person name="Lenhard B."/>
            <person name="Wells C."/>
            <person name="Kodzius R."/>
            <person name="Shimokawa K."/>
            <person name="Bajic V.B."/>
            <person name="Brenner S.E."/>
            <person name="Batalov S."/>
            <person name="Forrest A.R."/>
            <person name="Zavolan M."/>
            <person name="Davis M.J."/>
            <person name="Wilming L.G."/>
            <person name="Aidinis V."/>
            <person name="Allen J.E."/>
            <person name="Ambesi-Impiombato A."/>
            <person name="Apweiler R."/>
            <person name="Aturaliya R.N."/>
            <person name="Bailey T.L."/>
            <person name="Bansal M."/>
            <person name="Baxter L."/>
            <person name="Beisel K.W."/>
            <person name="Bersano T."/>
            <person name="Bono H."/>
            <person name="Chalk A.M."/>
            <person name="Chiu K.P."/>
            <person name="Choudhary V."/>
            <person name="Christoffels A."/>
            <person name="Clutterbuck D.R."/>
            <person name="Crowe M.L."/>
            <person name="Dalla E."/>
            <person name="Dalrymple B.P."/>
            <person name="de Bono B."/>
            <person name="Della Gatta G."/>
            <person name="di Bernardo D."/>
            <person name="Down T."/>
            <person name="Engstrom P."/>
            <person name="Fagiolini M."/>
            <person name="Faulkner G."/>
            <person name="Fletcher C.F."/>
            <person name="Fukushima T."/>
            <person name="Furuno M."/>
            <person name="Futaki S."/>
            <person name="Gariboldi M."/>
            <person name="Georgii-Hemming P."/>
            <person name="Gingeras T.R."/>
            <person name="Gojobori T."/>
            <person name="Green R.E."/>
            <person name="Gustincich S."/>
            <person name="Harbers M."/>
            <person name="Hayashi Y."/>
            <person name="Hensch T.K."/>
            <person name="Hirokawa N."/>
            <person name="Hill D."/>
            <person name="Huminiecki L."/>
            <person name="Iacono M."/>
            <person name="Ikeo K."/>
            <person name="Iwama A."/>
            <person name="Ishikawa T."/>
            <person name="Jakt M."/>
            <person name="Kanapin A."/>
            <person name="Katoh M."/>
            <person name="Kawasawa Y."/>
            <person name="Kelso J."/>
            <person name="Kitamura H."/>
            <person name="Kitano H."/>
            <person name="Kollias G."/>
            <person name="Krishnan S.P."/>
            <person name="Kruger A."/>
            <person name="Kummerfeld S.K."/>
            <person name="Kurochkin I.V."/>
            <person name="Lareau L.F."/>
            <person name="Lazarevic D."/>
            <person name="Lipovich L."/>
            <person name="Liu J."/>
            <person name="Liuni S."/>
            <person name="McWilliam S."/>
            <person name="Madan Babu M."/>
            <person name="Madera M."/>
            <person name="Marchionni L."/>
            <person name="Matsuda H."/>
            <person name="Matsuzawa S."/>
            <person name="Miki H."/>
            <person name="Mignone F."/>
            <person name="Miyake S."/>
            <person name="Morris K."/>
            <person name="Mottagui-Tabar S."/>
            <person name="Mulder N."/>
            <person name="Nakano N."/>
            <person name="Nakauchi H."/>
            <person name="Ng P."/>
            <person name="Nilsson R."/>
            <person name="Nishiguchi S."/>
            <person name="Nishikawa S."/>
            <person name="Nori F."/>
            <person name="Ohara O."/>
            <person name="Okazaki Y."/>
            <person name="Orlando V."/>
            <person name="Pang K.C."/>
            <person name="Pavan W.J."/>
            <person name="Pavesi G."/>
            <person name="Pesole G."/>
            <person name="Petrovsky N."/>
            <person name="Piazza S."/>
            <person name="Reed J."/>
            <person name="Reid J.F."/>
            <person name="Ring B.Z."/>
            <person name="Ringwald M."/>
            <person name="Rost B."/>
            <person name="Ruan Y."/>
            <person name="Salzberg S.L."/>
            <person name="Sandelin A."/>
            <person name="Schneider C."/>
            <person name="Schoenbach C."/>
            <person name="Sekiguchi K."/>
            <person name="Semple C.A."/>
            <person name="Seno S."/>
            <person name="Sessa L."/>
            <person name="Sheng Y."/>
            <person name="Shibata Y."/>
            <person name="Shimada H."/>
            <person name="Shimada K."/>
            <person name="Silva D."/>
            <person name="Sinclair B."/>
            <person name="Sperling S."/>
            <person name="Stupka E."/>
            <person name="Sugiura K."/>
            <person name="Sultana R."/>
            <person name="Takenaka Y."/>
            <person name="Taki K."/>
            <person name="Tammoja K."/>
            <person name="Tan S.L."/>
            <person name="Tang S."/>
            <person name="Taylor M.S."/>
            <person name="Tegner J."/>
            <person name="Teichmann S.A."/>
            <person name="Ueda H.R."/>
            <person name="van Nimwegen E."/>
            <person name="Verardo R."/>
            <person name="Wei C.L."/>
            <person name="Yagi K."/>
            <person name="Yamanishi H."/>
            <person name="Zabarovsky E."/>
            <person name="Zhu S."/>
            <person name="Zimmer A."/>
            <person name="Hide W."/>
            <person name="Bult C."/>
            <person name="Grimmond S.M."/>
            <person name="Teasdale R.D."/>
            <person name="Liu E.T."/>
            <person name="Brusic V."/>
            <person name="Quackenbush J."/>
            <person name="Wahlestedt C."/>
            <person name="Mattick J.S."/>
            <person name="Hume D.A."/>
            <person name="Kai C."/>
            <person name="Sasaki D."/>
            <person name="Tomaru Y."/>
            <person name="Fukuda S."/>
            <person name="Kanamori-Katayama M."/>
            <person name="Suzuki M."/>
            <person name="Aoki J."/>
            <person name="Arakawa T."/>
            <person name="Iida J."/>
            <person name="Imamura K."/>
            <person name="Itoh M."/>
            <person name="Kato T."/>
            <person name="Kawaji H."/>
            <person name="Kawagashira N."/>
            <person name="Kawashima T."/>
            <person name="Kojima M."/>
            <person name="Kondo S."/>
            <person name="Konno H."/>
            <person name="Nakano K."/>
            <person name="Ninomiya N."/>
            <person name="Nishio T."/>
            <person name="Okada M."/>
            <person name="Plessy C."/>
            <person name="Shibata K."/>
            <person name="Shiraki T."/>
            <person name="Suzuki S."/>
            <person name="Tagami M."/>
            <person name="Waki K."/>
            <person name="Watahiki A."/>
            <person name="Okamura-Oho Y."/>
            <person name="Suzuki H."/>
            <person name="Kawai J."/>
            <person name="Hayashizaki Y."/>
        </authorList>
    </citation>
    <scope>NUCLEOTIDE SEQUENCE [LARGE SCALE MRNA] (ISOFORM 2)</scope>
    <source>
        <strain>C57BL/6J</strain>
        <tissue>Lung</tissue>
        <tissue>Thymus</tissue>
    </source>
</reference>
<reference key="3">
    <citation type="journal article" date="2004" name="Genome Res.">
        <title>The status, quality, and expansion of the NIH full-length cDNA project: the Mammalian Gene Collection (MGC).</title>
        <authorList>
            <consortium name="The MGC Project Team"/>
        </authorList>
    </citation>
    <scope>NUCLEOTIDE SEQUENCE [LARGE SCALE MRNA] (ISOFORM 2)</scope>
    <source>
        <tissue>Heart</tissue>
        <tissue>Lung</tissue>
        <tissue>Thymus</tissue>
    </source>
</reference>
<dbReference type="EMBL" id="AY233463">
    <property type="protein sequence ID" value="AAO89508.1"/>
    <property type="molecule type" value="mRNA"/>
</dbReference>
<dbReference type="EMBL" id="AK042067">
    <property type="protein sequence ID" value="BAC31149.1"/>
    <property type="molecule type" value="mRNA"/>
</dbReference>
<dbReference type="EMBL" id="AK052525">
    <property type="protein sequence ID" value="BAC35025.1"/>
    <property type="molecule type" value="mRNA"/>
</dbReference>
<dbReference type="EMBL" id="BC061224">
    <property type="protein sequence ID" value="AAH61224.1"/>
    <property type="status" value="ALT_SEQ"/>
    <property type="molecule type" value="mRNA"/>
</dbReference>
<dbReference type="EMBL" id="BC120594">
    <property type="protein sequence ID" value="AAI20595.1"/>
    <property type="molecule type" value="mRNA"/>
</dbReference>
<dbReference type="EMBL" id="BC137742">
    <property type="protein sequence ID" value="AAI37743.1"/>
    <property type="molecule type" value="mRNA"/>
</dbReference>
<dbReference type="CCDS" id="CCDS19750.1">
    <molecule id="Q80YF6-2"/>
</dbReference>
<dbReference type="RefSeq" id="NP_780518.1">
    <property type="nucleotide sequence ID" value="NM_175309.4"/>
</dbReference>
<dbReference type="SMR" id="Q80YF6"/>
<dbReference type="STRING" id="10090.ENSMUSP00000062312"/>
<dbReference type="GlyCosmos" id="Q80YF6">
    <property type="glycosylation" value="1 site, No reported glycans"/>
</dbReference>
<dbReference type="GlyGen" id="Q80YF6">
    <property type="glycosylation" value="1 site"/>
</dbReference>
<dbReference type="iPTMnet" id="Q80YF6"/>
<dbReference type="PhosphoSitePlus" id="Q80YF6"/>
<dbReference type="PaxDb" id="10090-ENSMUSP00000062312"/>
<dbReference type="ProteomicsDB" id="297872">
    <molecule id="Q80YF6-1"/>
</dbReference>
<dbReference type="ProteomicsDB" id="297873">
    <molecule id="Q80YF6-2"/>
</dbReference>
<dbReference type="DNASU" id="100647"/>
<dbReference type="GeneID" id="100647"/>
<dbReference type="KEGG" id="mmu:100647"/>
<dbReference type="UCSC" id="uc008zzq.1">
    <molecule id="Q80YF6-2"/>
    <property type="organism name" value="mouse"/>
</dbReference>
<dbReference type="AGR" id="MGI:2140882"/>
<dbReference type="CTD" id="105375355"/>
<dbReference type="MGI" id="MGI:2140882">
    <property type="gene designation" value="Upk3b"/>
</dbReference>
<dbReference type="eggNOG" id="ENOG502RZJD">
    <property type="taxonomic scope" value="Eukaryota"/>
</dbReference>
<dbReference type="InParanoid" id="Q80YF6"/>
<dbReference type="OrthoDB" id="9939598at2759"/>
<dbReference type="PhylomeDB" id="Q80YF6"/>
<dbReference type="TreeFam" id="TF336628"/>
<dbReference type="BioGRID-ORCS" id="100647">
    <property type="hits" value="1 hit in 77 CRISPR screens"/>
</dbReference>
<dbReference type="PRO" id="PR:Q80YF6"/>
<dbReference type="Proteomes" id="UP000000589">
    <property type="component" value="Unplaced"/>
</dbReference>
<dbReference type="RNAct" id="Q80YF6">
    <property type="molecule type" value="protein"/>
</dbReference>
<dbReference type="GO" id="GO:0005886">
    <property type="term" value="C:plasma membrane"/>
    <property type="evidence" value="ECO:0007669"/>
    <property type="project" value="UniProtKB-SubCell"/>
</dbReference>
<dbReference type="GO" id="GO:0046325">
    <property type="term" value="P:negative regulation of D-glucose import"/>
    <property type="evidence" value="ECO:0000315"/>
    <property type="project" value="CACAO"/>
</dbReference>
<dbReference type="CDD" id="cd09969">
    <property type="entry name" value="UP_IIIb"/>
    <property type="match status" value="1"/>
</dbReference>
<dbReference type="InterPro" id="IPR024831">
    <property type="entry name" value="Uroplakin-3"/>
</dbReference>
<dbReference type="PANTHER" id="PTHR15446">
    <property type="entry name" value="UROPLAKIN III"/>
    <property type="match status" value="1"/>
</dbReference>
<dbReference type="PANTHER" id="PTHR15446:SF15">
    <property type="entry name" value="UROPLAKIN-3B"/>
    <property type="match status" value="1"/>
</dbReference>
<comment type="function">
    <text evidence="1">Component of the asymmetric unit membrane (AUM); a highly specialized biomembrane elaborated by terminally differentiated urothelial cells. May play an important role in AUM-cytoskeleton interaction in terminally differentiated urothelial cells. It also contributes to the formation of urothelial glycocalyx which may play an important role in preventing bacterial adherence (By similarity).</text>
</comment>
<comment type="subunit">
    <text>Heterodimer with uroplakin-1B (UPK1B).</text>
</comment>
<comment type="subcellular location">
    <subcellularLocation>
        <location evidence="6">Cell membrane</location>
        <topology evidence="6">Single-pass type I membrane protein</topology>
    </subcellularLocation>
    <text evidence="3">Heterodimer formation with UPK1B is a prerequisite to exit out of the endoplasmic reticulum (ER).</text>
</comment>
<comment type="alternative products">
    <event type="alternative splicing"/>
    <isoform>
        <id>Q80YF6-1</id>
        <name>1</name>
        <sequence type="displayed"/>
    </isoform>
    <isoform>
        <id>Q80YF6-2</id>
        <name>2</name>
        <sequence type="described" ref="VSP_035890"/>
    </isoform>
</comment>
<comment type="tissue specificity">
    <text evidence="3">Expression is urothelium-specific.</text>
</comment>
<comment type="similarity">
    <text evidence="6">Belongs to the uroplakin-3 family.</text>
</comment>
<comment type="sequence caution" evidence="6">
    <conflict type="miscellaneous discrepancy">
        <sequence resource="EMBL-CDS" id="AAH61224"/>
    </conflict>
    <text>Contaminating sequence. Potential poly-A sequence.</text>
</comment>
<gene>
    <name type="primary">Upk3b</name>
</gene>
<proteinExistence type="evidence at protein level"/>
<name>UPK3B_MOUSE</name>